<name>SECD_SEBTE</name>
<sequence length="406" mass="43634">MEIKTSRIVILILVVVIPAILIFRNPINLGLDLRGGTSVVLEAQEEDGKKLQPDTMDKVREIVQRRVDGLGVSEPVIQKSGENRLIVELAGVKDAQEAIDLIGTTAKLEFKIKTGDNSYGPTVLDGSAIKNAYVQQDQFGKPMIGFELNDEGAVKFAEITRTNMGKQLAIMLDGKEQSAPVIQSEIPGGKGSISGSFTYESAQNLANLLKAGALPVNIQIMETRSVDASLGAESIKATKMAAMIALVLVSLFMLAVYRVAGFVADLALCVFGILTAGLMCAIGTTLTLPGIAGFILSLGMAVDANVIIFERIKDEIMEGKRFQDCIDDGFNRAFPAILDGNITTLLITMVLFFFGTGPVRGFAVILTIGVLVSMFTAIFITKIIVKIFVNIFHLNGEKLFGLKGVE</sequence>
<gene>
    <name evidence="1" type="primary">secD</name>
    <name type="ordered locus">Sterm_2738</name>
</gene>
<comment type="function">
    <text evidence="1">Part of the Sec protein translocase complex. Interacts with the SecYEG preprotein conducting channel. SecDF uses the proton motive force (PMF) to complete protein translocation after the ATP-dependent function of SecA.</text>
</comment>
<comment type="subunit">
    <text evidence="1">Forms a complex with SecF. Part of the essential Sec protein translocation apparatus which comprises SecA, SecYEG and auxiliary proteins SecDF. Other proteins may also be involved.</text>
</comment>
<comment type="subcellular location">
    <subcellularLocation>
        <location evidence="1">Cell inner membrane</location>
        <topology evidence="1">Multi-pass membrane protein</topology>
    </subcellularLocation>
</comment>
<comment type="similarity">
    <text evidence="1">Belongs to the SecD/SecF family. SecD subfamily.</text>
</comment>
<reference key="1">
    <citation type="submission" date="2009-09" db="EMBL/GenBank/DDBJ databases">
        <title>The complete chromosome of Sebaldella termitidis ATCC 33386.</title>
        <authorList>
            <consortium name="US DOE Joint Genome Institute (JGI-PGF)"/>
            <person name="Lucas S."/>
            <person name="Copeland A."/>
            <person name="Lapidus A."/>
            <person name="Glavina del Rio T."/>
            <person name="Dalin E."/>
            <person name="Tice H."/>
            <person name="Bruce D."/>
            <person name="Goodwin L."/>
            <person name="Pitluck S."/>
            <person name="Kyrpides N."/>
            <person name="Mavromatis K."/>
            <person name="Ivanova N."/>
            <person name="Mikhailova N."/>
            <person name="Sims D."/>
            <person name="Meincke L."/>
            <person name="Brettin T."/>
            <person name="Detter J.C."/>
            <person name="Han C."/>
            <person name="Larimer F."/>
            <person name="Land M."/>
            <person name="Hauser L."/>
            <person name="Markowitz V."/>
            <person name="Cheng J.F."/>
            <person name="Hugenholtz P."/>
            <person name="Woyke T."/>
            <person name="Wu D."/>
            <person name="Eisen J.A."/>
        </authorList>
    </citation>
    <scope>NUCLEOTIDE SEQUENCE [LARGE SCALE GENOMIC DNA]</scope>
    <source>
        <strain>ATCC 33386 / NCTC 11300</strain>
    </source>
</reference>
<proteinExistence type="inferred from homology"/>
<feature type="chain" id="PRO_0000412682" description="Protein translocase subunit SecD">
    <location>
        <begin position="1"/>
        <end position="406"/>
    </location>
</feature>
<feature type="transmembrane region" description="Helical" evidence="1">
    <location>
        <begin position="8"/>
        <end position="28"/>
    </location>
</feature>
<feature type="transmembrane region" description="Helical" evidence="1">
    <location>
        <begin position="240"/>
        <end position="260"/>
    </location>
</feature>
<feature type="transmembrane region" description="Helical" evidence="1">
    <location>
        <begin position="262"/>
        <end position="282"/>
    </location>
</feature>
<feature type="transmembrane region" description="Helical" evidence="1">
    <location>
        <begin position="289"/>
        <end position="309"/>
    </location>
</feature>
<feature type="transmembrane region" description="Helical" evidence="1">
    <location>
        <begin position="334"/>
        <end position="354"/>
    </location>
</feature>
<feature type="transmembrane region" description="Helical" evidence="1">
    <location>
        <begin position="361"/>
        <end position="381"/>
    </location>
</feature>
<organism>
    <name type="scientific">Sebaldella termitidis (strain ATCC 33386 / NCTC 11300)</name>
    <dbReference type="NCBI Taxonomy" id="526218"/>
    <lineage>
        <taxon>Bacteria</taxon>
        <taxon>Fusobacteriati</taxon>
        <taxon>Fusobacteriota</taxon>
        <taxon>Fusobacteriia</taxon>
        <taxon>Fusobacteriales</taxon>
        <taxon>Leptotrichiaceae</taxon>
        <taxon>Sebaldella</taxon>
    </lineage>
</organism>
<keyword id="KW-0997">Cell inner membrane</keyword>
<keyword id="KW-1003">Cell membrane</keyword>
<keyword id="KW-0472">Membrane</keyword>
<keyword id="KW-0653">Protein transport</keyword>
<keyword id="KW-1185">Reference proteome</keyword>
<keyword id="KW-0811">Translocation</keyword>
<keyword id="KW-0812">Transmembrane</keyword>
<keyword id="KW-1133">Transmembrane helix</keyword>
<keyword id="KW-0813">Transport</keyword>
<evidence type="ECO:0000255" key="1">
    <source>
        <dbReference type="HAMAP-Rule" id="MF_01463"/>
    </source>
</evidence>
<dbReference type="EMBL" id="CP001739">
    <property type="protein sequence ID" value="ACZ09583.1"/>
    <property type="molecule type" value="Genomic_DNA"/>
</dbReference>
<dbReference type="RefSeq" id="WP_012862177.1">
    <property type="nucleotide sequence ID" value="NC_013517.1"/>
</dbReference>
<dbReference type="SMR" id="D1AMK9"/>
<dbReference type="STRING" id="526218.Sterm_2738"/>
<dbReference type="KEGG" id="str:Sterm_2738"/>
<dbReference type="eggNOG" id="COG0342">
    <property type="taxonomic scope" value="Bacteria"/>
</dbReference>
<dbReference type="HOGENOM" id="CLU_007894_4_2_0"/>
<dbReference type="Proteomes" id="UP000000845">
    <property type="component" value="Chromosome"/>
</dbReference>
<dbReference type="GO" id="GO:0005886">
    <property type="term" value="C:plasma membrane"/>
    <property type="evidence" value="ECO:0007669"/>
    <property type="project" value="UniProtKB-SubCell"/>
</dbReference>
<dbReference type="GO" id="GO:0015450">
    <property type="term" value="F:protein-transporting ATPase activity"/>
    <property type="evidence" value="ECO:0007669"/>
    <property type="project" value="InterPro"/>
</dbReference>
<dbReference type="GO" id="GO:0065002">
    <property type="term" value="P:intracellular protein transmembrane transport"/>
    <property type="evidence" value="ECO:0007669"/>
    <property type="project" value="UniProtKB-UniRule"/>
</dbReference>
<dbReference type="GO" id="GO:0006605">
    <property type="term" value="P:protein targeting"/>
    <property type="evidence" value="ECO:0007669"/>
    <property type="project" value="UniProtKB-UniRule"/>
</dbReference>
<dbReference type="GO" id="GO:0043952">
    <property type="term" value="P:protein transport by the Sec complex"/>
    <property type="evidence" value="ECO:0007669"/>
    <property type="project" value="UniProtKB-UniRule"/>
</dbReference>
<dbReference type="FunFam" id="1.20.1640.10:FF:000004">
    <property type="entry name" value="Protein translocase subunit SecD"/>
    <property type="match status" value="1"/>
</dbReference>
<dbReference type="Gene3D" id="3.30.70.3220">
    <property type="match status" value="1"/>
</dbReference>
<dbReference type="Gene3D" id="1.20.1640.10">
    <property type="entry name" value="Multidrug efflux transporter AcrB transmembrane domain"/>
    <property type="match status" value="1"/>
</dbReference>
<dbReference type="HAMAP" id="MF_01463_B">
    <property type="entry name" value="SecD_B"/>
    <property type="match status" value="1"/>
</dbReference>
<dbReference type="InterPro" id="IPR001036">
    <property type="entry name" value="Acrflvin-R"/>
</dbReference>
<dbReference type="InterPro" id="IPR005791">
    <property type="entry name" value="SecD"/>
</dbReference>
<dbReference type="InterPro" id="IPR022813">
    <property type="entry name" value="SecD/SecF_arch_bac"/>
</dbReference>
<dbReference type="InterPro" id="IPR022646">
    <property type="entry name" value="SecD/SecF_CS"/>
</dbReference>
<dbReference type="InterPro" id="IPR048631">
    <property type="entry name" value="SecD_1st"/>
</dbReference>
<dbReference type="InterPro" id="IPR048634">
    <property type="entry name" value="SecD_SecF_C"/>
</dbReference>
<dbReference type="InterPro" id="IPR055344">
    <property type="entry name" value="SecD_SecF_C_bact"/>
</dbReference>
<dbReference type="InterPro" id="IPR054384">
    <property type="entry name" value="SecDF_P1_head"/>
</dbReference>
<dbReference type="NCBIfam" id="TIGR00916">
    <property type="entry name" value="2A0604s01"/>
    <property type="match status" value="1"/>
</dbReference>
<dbReference type="NCBIfam" id="TIGR01129">
    <property type="entry name" value="secD"/>
    <property type="match status" value="1"/>
</dbReference>
<dbReference type="PANTHER" id="PTHR30081:SF1">
    <property type="entry name" value="PROTEIN TRANSLOCASE SUBUNIT SECD"/>
    <property type="match status" value="1"/>
</dbReference>
<dbReference type="PANTHER" id="PTHR30081">
    <property type="entry name" value="PROTEIN-EXPORT MEMBRANE PROTEIN SEC"/>
    <property type="match status" value="1"/>
</dbReference>
<dbReference type="Pfam" id="PF07549">
    <property type="entry name" value="Sec_GG"/>
    <property type="match status" value="1"/>
</dbReference>
<dbReference type="Pfam" id="PF21760">
    <property type="entry name" value="SecD_1st"/>
    <property type="match status" value="1"/>
</dbReference>
<dbReference type="Pfam" id="PF02355">
    <property type="entry name" value="SecD_SecF_C"/>
    <property type="match status" value="1"/>
</dbReference>
<dbReference type="Pfam" id="PF22599">
    <property type="entry name" value="SecDF_P1_head"/>
    <property type="match status" value="1"/>
</dbReference>
<dbReference type="PRINTS" id="PR00702">
    <property type="entry name" value="ACRIFLAVINRP"/>
</dbReference>
<dbReference type="SUPFAM" id="SSF82866">
    <property type="entry name" value="Multidrug efflux transporter AcrB transmembrane domain"/>
    <property type="match status" value="1"/>
</dbReference>
<protein>
    <recommendedName>
        <fullName evidence="1">Protein translocase subunit SecD</fullName>
    </recommendedName>
</protein>
<accession>D1AMK9</accession>